<evidence type="ECO:0000255" key="1">
    <source>
        <dbReference type="HAMAP-Rule" id="MF_00133"/>
    </source>
</evidence>
<comment type="function">
    <text evidence="1">The beta subunit is responsible for the synthesis of L-tryptophan from indole and L-serine.</text>
</comment>
<comment type="catalytic activity">
    <reaction evidence="1">
        <text>(1S,2R)-1-C-(indol-3-yl)glycerol 3-phosphate + L-serine = D-glyceraldehyde 3-phosphate + L-tryptophan + H2O</text>
        <dbReference type="Rhea" id="RHEA:10532"/>
        <dbReference type="ChEBI" id="CHEBI:15377"/>
        <dbReference type="ChEBI" id="CHEBI:33384"/>
        <dbReference type="ChEBI" id="CHEBI:57912"/>
        <dbReference type="ChEBI" id="CHEBI:58866"/>
        <dbReference type="ChEBI" id="CHEBI:59776"/>
        <dbReference type="EC" id="4.2.1.20"/>
    </reaction>
</comment>
<comment type="cofactor">
    <cofactor evidence="1">
        <name>pyridoxal 5'-phosphate</name>
        <dbReference type="ChEBI" id="CHEBI:597326"/>
    </cofactor>
</comment>
<comment type="pathway">
    <text evidence="1">Amino-acid biosynthesis; L-tryptophan biosynthesis; L-tryptophan from chorismate: step 5/5.</text>
</comment>
<comment type="subunit">
    <text evidence="1">Tetramer of two alpha and two beta chains.</text>
</comment>
<comment type="similarity">
    <text evidence="1">Belongs to the TrpB family.</text>
</comment>
<accession>Q2J2G4</accession>
<keyword id="KW-0028">Amino-acid biosynthesis</keyword>
<keyword id="KW-0057">Aromatic amino acid biosynthesis</keyword>
<keyword id="KW-0456">Lyase</keyword>
<keyword id="KW-0663">Pyridoxal phosphate</keyword>
<keyword id="KW-1185">Reference proteome</keyword>
<keyword id="KW-0822">Tryptophan biosynthesis</keyword>
<gene>
    <name evidence="1" type="primary">trpB</name>
    <name type="ordered locus">RPB_0635</name>
</gene>
<protein>
    <recommendedName>
        <fullName evidence="1">Tryptophan synthase beta chain</fullName>
        <ecNumber evidence="1">4.2.1.20</ecNumber>
    </recommendedName>
</protein>
<feature type="chain" id="PRO_1000095809" description="Tryptophan synthase beta chain">
    <location>
        <begin position="1"/>
        <end position="404"/>
    </location>
</feature>
<feature type="modified residue" description="N6-(pyridoxal phosphate)lysine" evidence="1">
    <location>
        <position position="98"/>
    </location>
</feature>
<sequence length="404" mass="43539">MNQILPNSFRSGPDERGHFGIFGGRFVAETLMPLILALEKAYAEAKDDPAFRAEMDGYLKHYVGRPSPLYFAERLTEHFGGAKIYFKREDLNHTGAHKVNNVLGQIMLARRMGKPRIIAETGAGMHGVATATMCAKFGLQCVVYMGAVDVDRQQPNVLRMKALGAEVRPVTSGAATLKDAMNEALRDWVTNVHDTFYCIGTVAGPHPYPMMVRDFQAVIGQEVRAQIMEAEGRLPDSLIACIGGGSNAMGLFHPFLDDSSVAIYGVEAAGHGLSKLHAASIAGGKPGVLHGNRTYLLMDTDGQIQEAHSISAGLDYPGIGPEHAWLHDVGRVEFMSATDTEALDAFKLCCRLEGIIPALEPAHALAKVGDLAPPLPKDHVMVLNMSGRGDKDLASVAEHLGGQF</sequence>
<organism>
    <name type="scientific">Rhodopseudomonas palustris (strain HaA2)</name>
    <dbReference type="NCBI Taxonomy" id="316058"/>
    <lineage>
        <taxon>Bacteria</taxon>
        <taxon>Pseudomonadati</taxon>
        <taxon>Pseudomonadota</taxon>
        <taxon>Alphaproteobacteria</taxon>
        <taxon>Hyphomicrobiales</taxon>
        <taxon>Nitrobacteraceae</taxon>
        <taxon>Rhodopseudomonas</taxon>
    </lineage>
</organism>
<dbReference type="EC" id="4.2.1.20" evidence="1"/>
<dbReference type="EMBL" id="CP000250">
    <property type="protein sequence ID" value="ABD05346.1"/>
    <property type="molecule type" value="Genomic_DNA"/>
</dbReference>
<dbReference type="RefSeq" id="WP_011439536.1">
    <property type="nucleotide sequence ID" value="NC_007778.1"/>
</dbReference>
<dbReference type="SMR" id="Q2J2G4"/>
<dbReference type="STRING" id="316058.RPB_0635"/>
<dbReference type="KEGG" id="rpb:RPB_0635"/>
<dbReference type="eggNOG" id="COG0133">
    <property type="taxonomic scope" value="Bacteria"/>
</dbReference>
<dbReference type="HOGENOM" id="CLU_016734_3_1_5"/>
<dbReference type="OrthoDB" id="9766131at2"/>
<dbReference type="UniPathway" id="UPA00035">
    <property type="reaction ID" value="UER00044"/>
</dbReference>
<dbReference type="Proteomes" id="UP000008809">
    <property type="component" value="Chromosome"/>
</dbReference>
<dbReference type="GO" id="GO:0005737">
    <property type="term" value="C:cytoplasm"/>
    <property type="evidence" value="ECO:0007669"/>
    <property type="project" value="TreeGrafter"/>
</dbReference>
<dbReference type="GO" id="GO:0004834">
    <property type="term" value="F:tryptophan synthase activity"/>
    <property type="evidence" value="ECO:0007669"/>
    <property type="project" value="UniProtKB-UniRule"/>
</dbReference>
<dbReference type="CDD" id="cd06446">
    <property type="entry name" value="Trp-synth_B"/>
    <property type="match status" value="1"/>
</dbReference>
<dbReference type="FunFam" id="3.40.50.1100:FF:000001">
    <property type="entry name" value="Tryptophan synthase beta chain"/>
    <property type="match status" value="1"/>
</dbReference>
<dbReference type="FunFam" id="3.40.50.1100:FF:000004">
    <property type="entry name" value="Tryptophan synthase beta chain"/>
    <property type="match status" value="1"/>
</dbReference>
<dbReference type="Gene3D" id="3.40.50.1100">
    <property type="match status" value="2"/>
</dbReference>
<dbReference type="HAMAP" id="MF_00133">
    <property type="entry name" value="Trp_synth_beta"/>
    <property type="match status" value="1"/>
</dbReference>
<dbReference type="InterPro" id="IPR006653">
    <property type="entry name" value="Trp_synth_b_CS"/>
</dbReference>
<dbReference type="InterPro" id="IPR006654">
    <property type="entry name" value="Trp_synth_beta"/>
</dbReference>
<dbReference type="InterPro" id="IPR023026">
    <property type="entry name" value="Trp_synth_beta/beta-like"/>
</dbReference>
<dbReference type="InterPro" id="IPR001926">
    <property type="entry name" value="TrpB-like_PALP"/>
</dbReference>
<dbReference type="InterPro" id="IPR036052">
    <property type="entry name" value="TrpB-like_PALP_sf"/>
</dbReference>
<dbReference type="NCBIfam" id="TIGR00263">
    <property type="entry name" value="trpB"/>
    <property type="match status" value="1"/>
</dbReference>
<dbReference type="PANTHER" id="PTHR48077:SF3">
    <property type="entry name" value="TRYPTOPHAN SYNTHASE"/>
    <property type="match status" value="1"/>
</dbReference>
<dbReference type="PANTHER" id="PTHR48077">
    <property type="entry name" value="TRYPTOPHAN SYNTHASE-RELATED"/>
    <property type="match status" value="1"/>
</dbReference>
<dbReference type="Pfam" id="PF00291">
    <property type="entry name" value="PALP"/>
    <property type="match status" value="1"/>
</dbReference>
<dbReference type="PIRSF" id="PIRSF001413">
    <property type="entry name" value="Trp_syn_beta"/>
    <property type="match status" value="1"/>
</dbReference>
<dbReference type="SUPFAM" id="SSF53686">
    <property type="entry name" value="Tryptophan synthase beta subunit-like PLP-dependent enzymes"/>
    <property type="match status" value="1"/>
</dbReference>
<dbReference type="PROSITE" id="PS00168">
    <property type="entry name" value="TRP_SYNTHASE_BETA"/>
    <property type="match status" value="1"/>
</dbReference>
<reference key="1">
    <citation type="submission" date="2006-01" db="EMBL/GenBank/DDBJ databases">
        <title>Complete sequence of Rhodopseudomonas palustris HaA2.</title>
        <authorList>
            <consortium name="US DOE Joint Genome Institute"/>
            <person name="Copeland A."/>
            <person name="Lucas S."/>
            <person name="Lapidus A."/>
            <person name="Barry K."/>
            <person name="Detter J.C."/>
            <person name="Glavina T."/>
            <person name="Hammon N."/>
            <person name="Israni S."/>
            <person name="Pitluck S."/>
            <person name="Chain P."/>
            <person name="Malfatti S."/>
            <person name="Shin M."/>
            <person name="Vergez L."/>
            <person name="Schmutz J."/>
            <person name="Larimer F."/>
            <person name="Land M."/>
            <person name="Hauser L."/>
            <person name="Pelletier D.A."/>
            <person name="Kyrpides N."/>
            <person name="Anderson I."/>
            <person name="Oda Y."/>
            <person name="Harwood C.S."/>
            <person name="Richardson P."/>
        </authorList>
    </citation>
    <scope>NUCLEOTIDE SEQUENCE [LARGE SCALE GENOMIC DNA]</scope>
    <source>
        <strain>HaA2</strain>
    </source>
</reference>
<name>TRPB_RHOP2</name>
<proteinExistence type="inferred from homology"/>